<reference key="1">
    <citation type="journal article" date="2011" name="J. Bacteriol.">
        <title>Comparative genomics of 28 Salmonella enterica isolates: evidence for CRISPR-mediated adaptive sublineage evolution.</title>
        <authorList>
            <person name="Fricke W.F."/>
            <person name="Mammel M.K."/>
            <person name="McDermott P.F."/>
            <person name="Tartera C."/>
            <person name="White D.G."/>
            <person name="Leclerc J.E."/>
            <person name="Ravel J."/>
            <person name="Cebula T.A."/>
        </authorList>
    </citation>
    <scope>NUCLEOTIDE SEQUENCE [LARGE SCALE GENOMIC DNA]</scope>
    <source>
        <strain>SL483</strain>
    </source>
</reference>
<dbReference type="EC" id="5.3.1.28" evidence="1"/>
<dbReference type="EMBL" id="CP001138">
    <property type="protein sequence ID" value="ACH50059.1"/>
    <property type="molecule type" value="Genomic_DNA"/>
</dbReference>
<dbReference type="SMR" id="B5EWJ3"/>
<dbReference type="KEGG" id="sea:SeAg_B0344"/>
<dbReference type="HOGENOM" id="CLU_080999_4_0_6"/>
<dbReference type="UniPathway" id="UPA00041">
    <property type="reaction ID" value="UER00436"/>
</dbReference>
<dbReference type="Proteomes" id="UP000008819">
    <property type="component" value="Chromosome"/>
</dbReference>
<dbReference type="GO" id="GO:0005737">
    <property type="term" value="C:cytoplasm"/>
    <property type="evidence" value="ECO:0007669"/>
    <property type="project" value="UniProtKB-SubCell"/>
</dbReference>
<dbReference type="GO" id="GO:0097367">
    <property type="term" value="F:carbohydrate derivative binding"/>
    <property type="evidence" value="ECO:0007669"/>
    <property type="project" value="InterPro"/>
</dbReference>
<dbReference type="GO" id="GO:0008968">
    <property type="term" value="F:D-sedoheptulose 7-phosphate isomerase activity"/>
    <property type="evidence" value="ECO:0007669"/>
    <property type="project" value="UniProtKB-UniRule"/>
</dbReference>
<dbReference type="GO" id="GO:0008270">
    <property type="term" value="F:zinc ion binding"/>
    <property type="evidence" value="ECO:0007669"/>
    <property type="project" value="UniProtKB-UniRule"/>
</dbReference>
<dbReference type="GO" id="GO:0005975">
    <property type="term" value="P:carbohydrate metabolic process"/>
    <property type="evidence" value="ECO:0007669"/>
    <property type="project" value="UniProtKB-UniRule"/>
</dbReference>
<dbReference type="GO" id="GO:2001061">
    <property type="term" value="P:D-glycero-D-manno-heptose 7-phosphate biosynthetic process"/>
    <property type="evidence" value="ECO:0007669"/>
    <property type="project" value="UniProtKB-UniPathway"/>
</dbReference>
<dbReference type="CDD" id="cd05006">
    <property type="entry name" value="SIS_GmhA"/>
    <property type="match status" value="1"/>
</dbReference>
<dbReference type="FunFam" id="3.40.50.10490:FF:000013">
    <property type="entry name" value="Phosphoheptose isomerase"/>
    <property type="match status" value="1"/>
</dbReference>
<dbReference type="Gene3D" id="3.40.50.10490">
    <property type="entry name" value="Glucose-6-phosphate isomerase like protein, domain 1"/>
    <property type="match status" value="1"/>
</dbReference>
<dbReference type="HAMAP" id="MF_00067">
    <property type="entry name" value="GmhA"/>
    <property type="match status" value="1"/>
</dbReference>
<dbReference type="InterPro" id="IPR035461">
    <property type="entry name" value="GmhA/DiaA"/>
</dbReference>
<dbReference type="InterPro" id="IPR004515">
    <property type="entry name" value="Phosphoheptose_Isoase"/>
</dbReference>
<dbReference type="InterPro" id="IPR001347">
    <property type="entry name" value="SIS_dom"/>
</dbReference>
<dbReference type="InterPro" id="IPR046348">
    <property type="entry name" value="SIS_dom_sf"/>
</dbReference>
<dbReference type="InterPro" id="IPR050099">
    <property type="entry name" value="SIS_GmhA/DiaA_subfam"/>
</dbReference>
<dbReference type="NCBIfam" id="TIGR00441">
    <property type="entry name" value="gmhA"/>
    <property type="match status" value="1"/>
</dbReference>
<dbReference type="NCBIfam" id="NF001628">
    <property type="entry name" value="PRK00414.1"/>
    <property type="match status" value="1"/>
</dbReference>
<dbReference type="PANTHER" id="PTHR30390:SF7">
    <property type="entry name" value="PHOSPHOHEPTOSE ISOMERASE"/>
    <property type="match status" value="1"/>
</dbReference>
<dbReference type="PANTHER" id="PTHR30390">
    <property type="entry name" value="SEDOHEPTULOSE 7-PHOSPHATE ISOMERASE / DNAA INITIATOR-ASSOCIATING FACTOR FOR REPLICATION INITIATION"/>
    <property type="match status" value="1"/>
</dbReference>
<dbReference type="Pfam" id="PF13580">
    <property type="entry name" value="SIS_2"/>
    <property type="match status" value="1"/>
</dbReference>
<dbReference type="SUPFAM" id="SSF53697">
    <property type="entry name" value="SIS domain"/>
    <property type="match status" value="1"/>
</dbReference>
<dbReference type="PROSITE" id="PS51464">
    <property type="entry name" value="SIS"/>
    <property type="match status" value="1"/>
</dbReference>
<gene>
    <name evidence="1" type="primary">gmhA</name>
    <name type="ordered locus">SeAg_B0344</name>
</gene>
<proteinExistence type="inferred from homology"/>
<name>GMHA_SALA4</name>
<sequence>MYQDLIRNELNEAAETLANFLKDDANIHAIQRAAVLLADSFKAGGKVLSCGNGGSHCDAMHFAEELTGRYRENRPGYPAIAISDVSHISCVSNDFGYDYIFSRYVEAVGREGDVLLGISTSGNSGNVIKAIAAAREKGMKVITLTGKDGGKMAGTADIEIRVPHFGYADRIQEIHIKVIHILIQLIEKEMVK</sequence>
<accession>B5EWJ3</accession>
<protein>
    <recommendedName>
        <fullName evidence="1">Phosphoheptose isomerase</fullName>
        <ecNumber evidence="1">5.3.1.28</ecNumber>
    </recommendedName>
    <alternativeName>
        <fullName evidence="1">Sedoheptulose 7-phosphate isomerase</fullName>
    </alternativeName>
</protein>
<evidence type="ECO:0000255" key="1">
    <source>
        <dbReference type="HAMAP-Rule" id="MF_00067"/>
    </source>
</evidence>
<feature type="chain" id="PRO_1000092286" description="Phosphoheptose isomerase">
    <location>
        <begin position="1"/>
        <end position="192"/>
    </location>
</feature>
<feature type="domain" description="SIS" evidence="1">
    <location>
        <begin position="37"/>
        <end position="192"/>
    </location>
</feature>
<feature type="binding site" evidence="1">
    <location>
        <begin position="52"/>
        <end position="54"/>
    </location>
    <ligand>
        <name>substrate</name>
    </ligand>
</feature>
<feature type="binding site" evidence="1">
    <location>
        <position position="61"/>
    </location>
    <ligand>
        <name>Zn(2+)</name>
        <dbReference type="ChEBI" id="CHEBI:29105"/>
    </ligand>
</feature>
<feature type="binding site" evidence="1">
    <location>
        <position position="65"/>
    </location>
    <ligand>
        <name>substrate</name>
    </ligand>
</feature>
<feature type="binding site" evidence="1">
    <location>
        <position position="65"/>
    </location>
    <ligand>
        <name>Zn(2+)</name>
        <dbReference type="ChEBI" id="CHEBI:29105"/>
    </ligand>
</feature>
<feature type="binding site" evidence="1">
    <location>
        <begin position="93"/>
        <end position="94"/>
    </location>
    <ligand>
        <name>substrate</name>
    </ligand>
</feature>
<feature type="binding site" evidence="1">
    <location>
        <begin position="119"/>
        <end position="121"/>
    </location>
    <ligand>
        <name>substrate</name>
    </ligand>
</feature>
<feature type="binding site" evidence="1">
    <location>
        <position position="124"/>
    </location>
    <ligand>
        <name>substrate</name>
    </ligand>
</feature>
<feature type="binding site" evidence="1">
    <location>
        <position position="172"/>
    </location>
    <ligand>
        <name>substrate</name>
    </ligand>
</feature>
<feature type="binding site" evidence="1">
    <location>
        <position position="172"/>
    </location>
    <ligand>
        <name>Zn(2+)</name>
        <dbReference type="ChEBI" id="CHEBI:29105"/>
    </ligand>
</feature>
<feature type="binding site" evidence="1">
    <location>
        <position position="180"/>
    </location>
    <ligand>
        <name>Zn(2+)</name>
        <dbReference type="ChEBI" id="CHEBI:29105"/>
    </ligand>
</feature>
<organism>
    <name type="scientific">Salmonella agona (strain SL483)</name>
    <dbReference type="NCBI Taxonomy" id="454166"/>
    <lineage>
        <taxon>Bacteria</taxon>
        <taxon>Pseudomonadati</taxon>
        <taxon>Pseudomonadota</taxon>
        <taxon>Gammaproteobacteria</taxon>
        <taxon>Enterobacterales</taxon>
        <taxon>Enterobacteriaceae</taxon>
        <taxon>Salmonella</taxon>
    </lineage>
</organism>
<comment type="function">
    <text evidence="1">Catalyzes the isomerization of sedoheptulose 7-phosphate in D-glycero-D-manno-heptose 7-phosphate.</text>
</comment>
<comment type="catalytic activity">
    <reaction evidence="1">
        <text>2 D-sedoheptulose 7-phosphate = D-glycero-alpha-D-manno-heptose 7-phosphate + D-glycero-beta-D-manno-heptose 7-phosphate</text>
        <dbReference type="Rhea" id="RHEA:27489"/>
        <dbReference type="ChEBI" id="CHEBI:57483"/>
        <dbReference type="ChEBI" id="CHEBI:60203"/>
        <dbReference type="ChEBI" id="CHEBI:60204"/>
        <dbReference type="EC" id="5.3.1.28"/>
    </reaction>
</comment>
<comment type="cofactor">
    <cofactor evidence="1">
        <name>Zn(2+)</name>
        <dbReference type="ChEBI" id="CHEBI:29105"/>
    </cofactor>
    <text evidence="1">Binds 1 zinc ion per subunit.</text>
</comment>
<comment type="pathway">
    <text evidence="1">Carbohydrate biosynthesis; D-glycero-D-manno-heptose 7-phosphate biosynthesis; D-glycero-alpha-D-manno-heptose 7-phosphate and D-glycero-beta-D-manno-heptose 7-phosphate from sedoheptulose 7-phosphate: step 1/1.</text>
</comment>
<comment type="subunit">
    <text evidence="1">Homotetramer.</text>
</comment>
<comment type="subcellular location">
    <subcellularLocation>
        <location evidence="1">Cytoplasm</location>
    </subcellularLocation>
</comment>
<comment type="miscellaneous">
    <text evidence="1">The reaction produces a racemic mixture of D-glycero-alpha-D-manno-heptose 7-phosphate and D-glycero-beta-D-manno-heptose 7-phosphate.</text>
</comment>
<comment type="similarity">
    <text evidence="1">Belongs to the SIS family. GmhA subfamily.</text>
</comment>
<keyword id="KW-0119">Carbohydrate metabolism</keyword>
<keyword id="KW-0963">Cytoplasm</keyword>
<keyword id="KW-0413">Isomerase</keyword>
<keyword id="KW-0479">Metal-binding</keyword>
<keyword id="KW-0862">Zinc</keyword>